<organism>
    <name type="scientific">Shigella sonnei (strain Ss046)</name>
    <dbReference type="NCBI Taxonomy" id="300269"/>
    <lineage>
        <taxon>Bacteria</taxon>
        <taxon>Pseudomonadati</taxon>
        <taxon>Pseudomonadota</taxon>
        <taxon>Gammaproteobacteria</taxon>
        <taxon>Enterobacterales</taxon>
        <taxon>Enterobacteriaceae</taxon>
        <taxon>Shigella</taxon>
    </lineage>
</organism>
<protein>
    <recommendedName>
        <fullName evidence="1">NAD(P)H dehydrogenase (quinone)</fullName>
        <ecNumber evidence="1">1.6.5.2</ecNumber>
    </recommendedName>
    <alternativeName>
        <fullName>Flavoprotein WrbA</fullName>
    </alternativeName>
    <alternativeName>
        <fullName evidence="1">NAD(P)H:quinone oxidoreductase</fullName>
        <shortName evidence="1">NQO</shortName>
    </alternativeName>
</protein>
<comment type="catalytic activity">
    <reaction evidence="1">
        <text>a quinone + NADH + H(+) = a quinol + NAD(+)</text>
        <dbReference type="Rhea" id="RHEA:46160"/>
        <dbReference type="ChEBI" id="CHEBI:15378"/>
        <dbReference type="ChEBI" id="CHEBI:24646"/>
        <dbReference type="ChEBI" id="CHEBI:57540"/>
        <dbReference type="ChEBI" id="CHEBI:57945"/>
        <dbReference type="ChEBI" id="CHEBI:132124"/>
        <dbReference type="EC" id="1.6.5.2"/>
    </reaction>
</comment>
<comment type="catalytic activity">
    <reaction evidence="1">
        <text>a quinone + NADPH + H(+) = a quinol + NADP(+)</text>
        <dbReference type="Rhea" id="RHEA:46164"/>
        <dbReference type="ChEBI" id="CHEBI:15378"/>
        <dbReference type="ChEBI" id="CHEBI:24646"/>
        <dbReference type="ChEBI" id="CHEBI:57783"/>
        <dbReference type="ChEBI" id="CHEBI:58349"/>
        <dbReference type="ChEBI" id="CHEBI:132124"/>
        <dbReference type="EC" id="1.6.5.2"/>
    </reaction>
</comment>
<comment type="cofactor">
    <cofactor evidence="1">
        <name>FMN</name>
        <dbReference type="ChEBI" id="CHEBI:58210"/>
    </cofactor>
    <text evidence="1">Binds 1 FMN per monomer.</text>
</comment>
<comment type="similarity">
    <text evidence="1">Belongs to the WrbA family.</text>
</comment>
<keyword id="KW-0285">Flavoprotein</keyword>
<keyword id="KW-0288">FMN</keyword>
<keyword id="KW-0520">NAD</keyword>
<keyword id="KW-0521">NADP</keyword>
<keyword id="KW-0547">Nucleotide-binding</keyword>
<keyword id="KW-0560">Oxidoreductase</keyword>
<keyword id="KW-1185">Reference proteome</keyword>
<feature type="chain" id="PRO_0000291032" description="NAD(P)H dehydrogenase (quinone)">
    <location>
        <begin position="1"/>
        <end position="201"/>
    </location>
</feature>
<feature type="domain" description="Flavodoxin-like" evidence="1">
    <location>
        <begin position="7"/>
        <end position="192"/>
    </location>
</feature>
<feature type="binding site" evidence="1">
    <location>
        <begin position="13"/>
        <end position="18"/>
    </location>
    <ligand>
        <name>FMN</name>
        <dbReference type="ChEBI" id="CHEBI:58210"/>
    </ligand>
</feature>
<feature type="binding site" evidence="1">
    <location>
        <position position="15"/>
    </location>
    <ligand>
        <name>NAD(+)</name>
        <dbReference type="ChEBI" id="CHEBI:57540"/>
    </ligand>
</feature>
<feature type="binding site" evidence="1">
    <location>
        <begin position="81"/>
        <end position="83"/>
    </location>
    <ligand>
        <name>FMN</name>
        <dbReference type="ChEBI" id="CHEBI:58210"/>
    </ligand>
</feature>
<feature type="binding site" evidence="1">
    <location>
        <position position="101"/>
    </location>
    <ligand>
        <name>substrate</name>
    </ligand>
</feature>
<feature type="binding site" evidence="1">
    <location>
        <begin position="116"/>
        <end position="121"/>
    </location>
    <ligand>
        <name>FMN</name>
        <dbReference type="ChEBI" id="CHEBI:58210"/>
    </ligand>
</feature>
<feature type="binding site" evidence="1">
    <location>
        <position position="136"/>
    </location>
    <ligand>
        <name>FMN</name>
        <dbReference type="ChEBI" id="CHEBI:58210"/>
    </ligand>
</feature>
<reference key="1">
    <citation type="journal article" date="2005" name="Nucleic Acids Res.">
        <title>Genome dynamics and diversity of Shigella species, the etiologic agents of bacillary dysentery.</title>
        <authorList>
            <person name="Yang F."/>
            <person name="Yang J."/>
            <person name="Zhang X."/>
            <person name="Chen L."/>
            <person name="Jiang Y."/>
            <person name="Yan Y."/>
            <person name="Tang X."/>
            <person name="Wang J."/>
            <person name="Xiong Z."/>
            <person name="Dong J."/>
            <person name="Xue Y."/>
            <person name="Zhu Y."/>
            <person name="Xu X."/>
            <person name="Sun L."/>
            <person name="Chen S."/>
            <person name="Nie H."/>
            <person name="Peng J."/>
            <person name="Xu J."/>
            <person name="Wang Y."/>
            <person name="Yuan Z."/>
            <person name="Wen Y."/>
            <person name="Yao Z."/>
            <person name="Shen Y."/>
            <person name="Qiang B."/>
            <person name="Hou Y."/>
            <person name="Yu J."/>
            <person name="Jin Q."/>
        </authorList>
    </citation>
    <scope>NUCLEOTIDE SEQUENCE [LARGE SCALE GENOMIC DNA]</scope>
    <source>
        <strain>Ss046</strain>
    </source>
</reference>
<dbReference type="EC" id="1.6.5.2" evidence="1"/>
<dbReference type="EMBL" id="CP000038">
    <property type="protein sequence ID" value="AAZ87745.1"/>
    <property type="molecule type" value="Genomic_DNA"/>
</dbReference>
<dbReference type="SMR" id="Q3Z3B7"/>
<dbReference type="CAZy" id="AA6">
    <property type="family name" value="Auxiliary Activities 6"/>
</dbReference>
<dbReference type="KEGG" id="ssn:SSON_1014"/>
<dbReference type="HOGENOM" id="CLU_051402_0_2_6"/>
<dbReference type="Proteomes" id="UP000002529">
    <property type="component" value="Chromosome"/>
</dbReference>
<dbReference type="GO" id="GO:0016020">
    <property type="term" value="C:membrane"/>
    <property type="evidence" value="ECO:0007669"/>
    <property type="project" value="TreeGrafter"/>
</dbReference>
<dbReference type="GO" id="GO:0050660">
    <property type="term" value="F:flavin adenine dinucleotide binding"/>
    <property type="evidence" value="ECO:0007669"/>
    <property type="project" value="UniProtKB-UniRule"/>
</dbReference>
<dbReference type="GO" id="GO:0010181">
    <property type="term" value="F:FMN binding"/>
    <property type="evidence" value="ECO:0007669"/>
    <property type="project" value="InterPro"/>
</dbReference>
<dbReference type="GO" id="GO:0051287">
    <property type="term" value="F:NAD binding"/>
    <property type="evidence" value="ECO:0007669"/>
    <property type="project" value="UniProtKB-UniRule"/>
</dbReference>
<dbReference type="GO" id="GO:0050136">
    <property type="term" value="F:NADH:ubiquinone reductase (non-electrogenic) activity"/>
    <property type="evidence" value="ECO:0007669"/>
    <property type="project" value="RHEA"/>
</dbReference>
<dbReference type="GO" id="GO:0050661">
    <property type="term" value="F:NADP binding"/>
    <property type="evidence" value="ECO:0007669"/>
    <property type="project" value="UniProtKB-UniRule"/>
</dbReference>
<dbReference type="GO" id="GO:0008753">
    <property type="term" value="F:NADPH dehydrogenase (quinone) activity"/>
    <property type="evidence" value="ECO:0007669"/>
    <property type="project" value="RHEA"/>
</dbReference>
<dbReference type="FunFam" id="3.40.50.360:FF:000004">
    <property type="entry name" value="NAD(P)H dehydrogenase (quinone)"/>
    <property type="match status" value="1"/>
</dbReference>
<dbReference type="Gene3D" id="3.40.50.360">
    <property type="match status" value="1"/>
</dbReference>
<dbReference type="HAMAP" id="MF_01017">
    <property type="entry name" value="NQOR"/>
    <property type="match status" value="1"/>
</dbReference>
<dbReference type="InterPro" id="IPR008254">
    <property type="entry name" value="Flavodoxin/NO_synth"/>
</dbReference>
<dbReference type="InterPro" id="IPR029039">
    <property type="entry name" value="Flavoprotein-like_sf"/>
</dbReference>
<dbReference type="InterPro" id="IPR010089">
    <property type="entry name" value="Flavoprotein_WrbA-like"/>
</dbReference>
<dbReference type="InterPro" id="IPR005025">
    <property type="entry name" value="FMN_Rdtase-like_dom"/>
</dbReference>
<dbReference type="InterPro" id="IPR037513">
    <property type="entry name" value="NQO"/>
</dbReference>
<dbReference type="NCBIfam" id="TIGR01755">
    <property type="entry name" value="flav_wrbA"/>
    <property type="match status" value="1"/>
</dbReference>
<dbReference type="NCBIfam" id="NF002999">
    <property type="entry name" value="PRK03767.1"/>
    <property type="match status" value="1"/>
</dbReference>
<dbReference type="PANTHER" id="PTHR30546">
    <property type="entry name" value="FLAVODOXIN-RELATED PROTEIN WRBA-RELATED"/>
    <property type="match status" value="1"/>
</dbReference>
<dbReference type="PANTHER" id="PTHR30546:SF23">
    <property type="entry name" value="FLAVOPROTEIN-LIKE PROTEIN YCP4-RELATED"/>
    <property type="match status" value="1"/>
</dbReference>
<dbReference type="Pfam" id="PF03358">
    <property type="entry name" value="FMN_red"/>
    <property type="match status" value="1"/>
</dbReference>
<dbReference type="SUPFAM" id="SSF52218">
    <property type="entry name" value="Flavoproteins"/>
    <property type="match status" value="1"/>
</dbReference>
<dbReference type="PROSITE" id="PS50902">
    <property type="entry name" value="FLAVODOXIN_LIKE"/>
    <property type="match status" value="1"/>
</dbReference>
<accession>Q3Z3B7</accession>
<gene>
    <name type="ordered locus">SSON_1014</name>
</gene>
<name>NQOR_SHISS</name>
<evidence type="ECO:0000255" key="1">
    <source>
        <dbReference type="HAMAP-Rule" id="MF_01017"/>
    </source>
</evidence>
<sequence length="201" mass="21202">MSVKARILVLYYSMYGHIETMARAVAEGASKVDGAEVVVKRVPETMPPQLFEKAGGKTQTAPVATPQELADYDAIIFGTPTRFGNMSGQMRTFLDQTGGLWASGALYGKLASVFSSTGTGGGQEQTITSTWTTLAHHGMVIVPIGYAAQELFDVSQVRGGTPYGATTIAGGDGSRQPSQEELSIARYQGEYVAGLAVKLNG</sequence>
<proteinExistence type="inferred from homology"/>